<reference key="1">
    <citation type="journal article" date="2008" name="PLoS ONE">
        <title>Environmental adaptation: genomic analysis of the piezotolerant and psychrotolerant deep-sea iron reducing bacterium Shewanella piezotolerans WP3.</title>
        <authorList>
            <person name="Wang F."/>
            <person name="Wang J."/>
            <person name="Jian H."/>
            <person name="Zhang B."/>
            <person name="Li S."/>
            <person name="Wang F."/>
            <person name="Zeng X."/>
            <person name="Gao L."/>
            <person name="Bartlett D.H."/>
            <person name="Yu J."/>
            <person name="Hu S."/>
            <person name="Xiao X."/>
        </authorList>
    </citation>
    <scope>NUCLEOTIDE SEQUENCE [LARGE SCALE GENOMIC DNA]</scope>
    <source>
        <strain>WP3 / JCM 13877</strain>
    </source>
</reference>
<name>RUVC_SHEPW</name>
<accession>B8CNX9</accession>
<sequence length="173" mass="18421">MAIILGVDPGSRITGYGVINCVGRQQVYVGSGCIRTSSDELPLRLKQIFDGLSEIIRQYQPDEFAIERVFMAKNADSALKLGQARGAAIVAATAANLPVAEYSATQIKSAVVGTGRAQKSQVQHMIQQLLKLPSAPQADAADALGVAVCHYHTNQSLAAMGGRANSRTYGRYK</sequence>
<dbReference type="EC" id="3.1.21.10" evidence="1"/>
<dbReference type="EMBL" id="CP000472">
    <property type="protein sequence ID" value="ACJ29098.1"/>
    <property type="molecule type" value="Genomic_DNA"/>
</dbReference>
<dbReference type="RefSeq" id="WP_020912458.1">
    <property type="nucleotide sequence ID" value="NC_011566.1"/>
</dbReference>
<dbReference type="SMR" id="B8CNX9"/>
<dbReference type="STRING" id="225849.swp_2353"/>
<dbReference type="KEGG" id="swp:swp_2353"/>
<dbReference type="eggNOG" id="COG0817">
    <property type="taxonomic scope" value="Bacteria"/>
</dbReference>
<dbReference type="HOGENOM" id="CLU_091257_2_1_6"/>
<dbReference type="OrthoDB" id="9805499at2"/>
<dbReference type="Proteomes" id="UP000000753">
    <property type="component" value="Chromosome"/>
</dbReference>
<dbReference type="GO" id="GO:0005737">
    <property type="term" value="C:cytoplasm"/>
    <property type="evidence" value="ECO:0007669"/>
    <property type="project" value="UniProtKB-SubCell"/>
</dbReference>
<dbReference type="GO" id="GO:0048476">
    <property type="term" value="C:Holliday junction resolvase complex"/>
    <property type="evidence" value="ECO:0007669"/>
    <property type="project" value="UniProtKB-UniRule"/>
</dbReference>
<dbReference type="GO" id="GO:0008821">
    <property type="term" value="F:crossover junction DNA endonuclease activity"/>
    <property type="evidence" value="ECO:0007669"/>
    <property type="project" value="UniProtKB-UniRule"/>
</dbReference>
<dbReference type="GO" id="GO:0003677">
    <property type="term" value="F:DNA binding"/>
    <property type="evidence" value="ECO:0007669"/>
    <property type="project" value="UniProtKB-KW"/>
</dbReference>
<dbReference type="GO" id="GO:0000287">
    <property type="term" value="F:magnesium ion binding"/>
    <property type="evidence" value="ECO:0007669"/>
    <property type="project" value="UniProtKB-UniRule"/>
</dbReference>
<dbReference type="GO" id="GO:0006310">
    <property type="term" value="P:DNA recombination"/>
    <property type="evidence" value="ECO:0007669"/>
    <property type="project" value="UniProtKB-UniRule"/>
</dbReference>
<dbReference type="GO" id="GO:0006281">
    <property type="term" value="P:DNA repair"/>
    <property type="evidence" value="ECO:0007669"/>
    <property type="project" value="UniProtKB-UniRule"/>
</dbReference>
<dbReference type="CDD" id="cd16962">
    <property type="entry name" value="RuvC"/>
    <property type="match status" value="1"/>
</dbReference>
<dbReference type="FunFam" id="3.30.420.10:FF:000002">
    <property type="entry name" value="Crossover junction endodeoxyribonuclease RuvC"/>
    <property type="match status" value="1"/>
</dbReference>
<dbReference type="Gene3D" id="3.30.420.10">
    <property type="entry name" value="Ribonuclease H-like superfamily/Ribonuclease H"/>
    <property type="match status" value="1"/>
</dbReference>
<dbReference type="HAMAP" id="MF_00034">
    <property type="entry name" value="RuvC"/>
    <property type="match status" value="1"/>
</dbReference>
<dbReference type="InterPro" id="IPR012337">
    <property type="entry name" value="RNaseH-like_sf"/>
</dbReference>
<dbReference type="InterPro" id="IPR036397">
    <property type="entry name" value="RNaseH_sf"/>
</dbReference>
<dbReference type="InterPro" id="IPR020563">
    <property type="entry name" value="X-over_junc_endoDNase_Mg_BS"/>
</dbReference>
<dbReference type="InterPro" id="IPR002176">
    <property type="entry name" value="X-over_junc_endoDNase_RuvC"/>
</dbReference>
<dbReference type="NCBIfam" id="NF000711">
    <property type="entry name" value="PRK00039.2-1"/>
    <property type="match status" value="1"/>
</dbReference>
<dbReference type="NCBIfam" id="TIGR00228">
    <property type="entry name" value="ruvC"/>
    <property type="match status" value="1"/>
</dbReference>
<dbReference type="PANTHER" id="PTHR30194">
    <property type="entry name" value="CROSSOVER JUNCTION ENDODEOXYRIBONUCLEASE RUVC"/>
    <property type="match status" value="1"/>
</dbReference>
<dbReference type="PANTHER" id="PTHR30194:SF3">
    <property type="entry name" value="CROSSOVER JUNCTION ENDODEOXYRIBONUCLEASE RUVC"/>
    <property type="match status" value="1"/>
</dbReference>
<dbReference type="Pfam" id="PF02075">
    <property type="entry name" value="RuvC"/>
    <property type="match status" value="1"/>
</dbReference>
<dbReference type="PRINTS" id="PR00696">
    <property type="entry name" value="RSOLVASERUVC"/>
</dbReference>
<dbReference type="SUPFAM" id="SSF53098">
    <property type="entry name" value="Ribonuclease H-like"/>
    <property type="match status" value="1"/>
</dbReference>
<dbReference type="PROSITE" id="PS01321">
    <property type="entry name" value="RUVC"/>
    <property type="match status" value="1"/>
</dbReference>
<comment type="function">
    <text evidence="1">The RuvA-RuvB-RuvC complex processes Holliday junction (HJ) DNA during genetic recombination and DNA repair. Endonuclease that resolves HJ intermediates. Cleaves cruciform DNA by making single-stranded nicks across the HJ at symmetrical positions within the homologous arms, yielding a 5'-phosphate and a 3'-hydroxyl group; requires a central core of homology in the junction. The consensus cleavage sequence is 5'-(A/T)TT(C/G)-3'. Cleavage occurs on the 3'-side of the TT dinucleotide at the point of strand exchange. HJ branch migration catalyzed by RuvA-RuvB allows RuvC to scan DNA until it finds its consensus sequence, where it cleaves and resolves the cruciform DNA.</text>
</comment>
<comment type="catalytic activity">
    <reaction evidence="1">
        <text>Endonucleolytic cleavage at a junction such as a reciprocal single-stranded crossover between two homologous DNA duplexes (Holliday junction).</text>
        <dbReference type="EC" id="3.1.21.10"/>
    </reaction>
</comment>
<comment type="cofactor">
    <cofactor evidence="1">
        <name>Mg(2+)</name>
        <dbReference type="ChEBI" id="CHEBI:18420"/>
    </cofactor>
    <text evidence="1">Binds 2 Mg(2+) ion per subunit.</text>
</comment>
<comment type="subunit">
    <text evidence="1">Homodimer which binds Holliday junction (HJ) DNA. The HJ becomes 2-fold symmetrical on binding to RuvC with unstacked arms; it has a different conformation from HJ DNA in complex with RuvA. In the full resolvosome a probable DNA-RuvA(4)-RuvB(12)-RuvC(2) complex forms which resolves the HJ.</text>
</comment>
<comment type="subcellular location">
    <subcellularLocation>
        <location evidence="1">Cytoplasm</location>
    </subcellularLocation>
</comment>
<comment type="similarity">
    <text evidence="1">Belongs to the RuvC family.</text>
</comment>
<keyword id="KW-0963">Cytoplasm</keyword>
<keyword id="KW-0227">DNA damage</keyword>
<keyword id="KW-0233">DNA recombination</keyword>
<keyword id="KW-0234">DNA repair</keyword>
<keyword id="KW-0238">DNA-binding</keyword>
<keyword id="KW-0255">Endonuclease</keyword>
<keyword id="KW-0378">Hydrolase</keyword>
<keyword id="KW-0460">Magnesium</keyword>
<keyword id="KW-0479">Metal-binding</keyword>
<keyword id="KW-0540">Nuclease</keyword>
<evidence type="ECO:0000255" key="1">
    <source>
        <dbReference type="HAMAP-Rule" id="MF_00034"/>
    </source>
</evidence>
<organism>
    <name type="scientific">Shewanella piezotolerans (strain WP3 / JCM 13877)</name>
    <dbReference type="NCBI Taxonomy" id="225849"/>
    <lineage>
        <taxon>Bacteria</taxon>
        <taxon>Pseudomonadati</taxon>
        <taxon>Pseudomonadota</taxon>
        <taxon>Gammaproteobacteria</taxon>
        <taxon>Alteromonadales</taxon>
        <taxon>Shewanellaceae</taxon>
        <taxon>Shewanella</taxon>
    </lineage>
</organism>
<gene>
    <name evidence="1" type="primary">ruvC</name>
    <name type="ordered locus">swp_2353</name>
</gene>
<protein>
    <recommendedName>
        <fullName evidence="1">Crossover junction endodeoxyribonuclease RuvC</fullName>
        <ecNumber evidence="1">3.1.21.10</ecNumber>
    </recommendedName>
    <alternativeName>
        <fullName evidence="1">Holliday junction nuclease RuvC</fullName>
    </alternativeName>
    <alternativeName>
        <fullName evidence="1">Holliday junction resolvase RuvC</fullName>
    </alternativeName>
</protein>
<proteinExistence type="inferred from homology"/>
<feature type="chain" id="PRO_1000195273" description="Crossover junction endodeoxyribonuclease RuvC">
    <location>
        <begin position="1"/>
        <end position="173"/>
    </location>
</feature>
<feature type="active site" evidence="1">
    <location>
        <position position="8"/>
    </location>
</feature>
<feature type="active site" evidence="1">
    <location>
        <position position="67"/>
    </location>
</feature>
<feature type="active site" evidence="1">
    <location>
        <position position="139"/>
    </location>
</feature>
<feature type="binding site" evidence="1">
    <location>
        <position position="8"/>
    </location>
    <ligand>
        <name>Mg(2+)</name>
        <dbReference type="ChEBI" id="CHEBI:18420"/>
        <label>1</label>
    </ligand>
</feature>
<feature type="binding site" evidence="1">
    <location>
        <position position="67"/>
    </location>
    <ligand>
        <name>Mg(2+)</name>
        <dbReference type="ChEBI" id="CHEBI:18420"/>
        <label>2</label>
    </ligand>
</feature>
<feature type="binding site" evidence="1">
    <location>
        <position position="139"/>
    </location>
    <ligand>
        <name>Mg(2+)</name>
        <dbReference type="ChEBI" id="CHEBI:18420"/>
        <label>1</label>
    </ligand>
</feature>